<comment type="function">
    <text evidence="1">IGPS catalyzes the conversion of PRFAR and glutamine to IGP, AICAR and glutamate. The HisH subunit provides the glutamine amidotransferase activity that produces the ammonia necessary to HisF for the synthesis of IGP and AICAR (By similarity).</text>
</comment>
<comment type="catalytic activity">
    <reaction>
        <text>5-[(5-phospho-1-deoxy-D-ribulos-1-ylimino)methylamino]-1-(5-phospho-beta-D-ribosyl)imidazole-4-carboxamide + L-glutamine = D-erythro-1-(imidazol-4-yl)glycerol 3-phosphate + 5-amino-1-(5-phospho-beta-D-ribosyl)imidazole-4-carboxamide + L-glutamate + H(+)</text>
        <dbReference type="Rhea" id="RHEA:24793"/>
        <dbReference type="ChEBI" id="CHEBI:15378"/>
        <dbReference type="ChEBI" id="CHEBI:29985"/>
        <dbReference type="ChEBI" id="CHEBI:58278"/>
        <dbReference type="ChEBI" id="CHEBI:58359"/>
        <dbReference type="ChEBI" id="CHEBI:58475"/>
        <dbReference type="ChEBI" id="CHEBI:58525"/>
        <dbReference type="EC" id="4.3.2.10"/>
    </reaction>
</comment>
<comment type="catalytic activity">
    <reaction>
        <text>L-glutamine + H2O = L-glutamate + NH4(+)</text>
        <dbReference type="Rhea" id="RHEA:15889"/>
        <dbReference type="ChEBI" id="CHEBI:15377"/>
        <dbReference type="ChEBI" id="CHEBI:28938"/>
        <dbReference type="ChEBI" id="CHEBI:29985"/>
        <dbReference type="ChEBI" id="CHEBI:58359"/>
        <dbReference type="EC" id="3.5.1.2"/>
    </reaction>
</comment>
<comment type="pathway">
    <text>Amino-acid biosynthesis; L-histidine biosynthesis; L-histidine from 5-phospho-alpha-D-ribose 1-diphosphate: step 5/9.</text>
</comment>
<comment type="subunit">
    <text evidence="1">Heterodimer of HisH and HisF.</text>
</comment>
<comment type="subcellular location">
    <subcellularLocation>
        <location evidence="1">Cytoplasm</location>
    </subcellularLocation>
</comment>
<gene>
    <name type="primary">hisH1</name>
    <name type="ordered locus">PA5142</name>
</gene>
<evidence type="ECO:0000250" key="1"/>
<dbReference type="EC" id="4.3.2.10"/>
<dbReference type="EC" id="3.5.1.2"/>
<dbReference type="EMBL" id="AE004091">
    <property type="protein sequence ID" value="AAG08527.1"/>
    <property type="molecule type" value="Genomic_DNA"/>
</dbReference>
<dbReference type="PIR" id="B83003">
    <property type="entry name" value="B83003"/>
</dbReference>
<dbReference type="RefSeq" id="NP_253829.1">
    <property type="nucleotide sequence ID" value="NC_002516.2"/>
</dbReference>
<dbReference type="RefSeq" id="WP_003121251.1">
    <property type="nucleotide sequence ID" value="NC_002516.2"/>
</dbReference>
<dbReference type="SMR" id="Q9HU42"/>
<dbReference type="STRING" id="208964.PA5142"/>
<dbReference type="MEROPS" id="C26.965"/>
<dbReference type="PaxDb" id="208964-PA5142"/>
<dbReference type="GeneID" id="878788"/>
<dbReference type="KEGG" id="pae:PA5142"/>
<dbReference type="PATRIC" id="fig|208964.12.peg.5389"/>
<dbReference type="PseudoCAP" id="PA5142"/>
<dbReference type="HOGENOM" id="CLU_071837_2_0_6"/>
<dbReference type="InParanoid" id="Q9HU42"/>
<dbReference type="OrthoDB" id="9807137at2"/>
<dbReference type="PhylomeDB" id="Q9HU42"/>
<dbReference type="BioCyc" id="PAER208964:G1FZ6-5257-MONOMER"/>
<dbReference type="UniPathway" id="UPA00031">
    <property type="reaction ID" value="UER00010"/>
</dbReference>
<dbReference type="Proteomes" id="UP000002438">
    <property type="component" value="Chromosome"/>
</dbReference>
<dbReference type="GO" id="GO:0005737">
    <property type="term" value="C:cytoplasm"/>
    <property type="evidence" value="ECO:0007669"/>
    <property type="project" value="UniProtKB-SubCell"/>
</dbReference>
<dbReference type="GO" id="GO:0004359">
    <property type="term" value="F:glutaminase activity"/>
    <property type="evidence" value="ECO:0007669"/>
    <property type="project" value="UniProtKB-EC"/>
</dbReference>
<dbReference type="GO" id="GO:0000107">
    <property type="term" value="F:imidazoleglycerol-phosphate synthase activity"/>
    <property type="evidence" value="ECO:0000318"/>
    <property type="project" value="GO_Central"/>
</dbReference>
<dbReference type="GO" id="GO:0016829">
    <property type="term" value="F:lyase activity"/>
    <property type="evidence" value="ECO:0007669"/>
    <property type="project" value="UniProtKB-KW"/>
</dbReference>
<dbReference type="GO" id="GO:0000105">
    <property type="term" value="P:L-histidine biosynthetic process"/>
    <property type="evidence" value="ECO:0007669"/>
    <property type="project" value="UniProtKB-UniRule"/>
</dbReference>
<dbReference type="CDD" id="cd01748">
    <property type="entry name" value="GATase1_IGP_Synthase"/>
    <property type="match status" value="1"/>
</dbReference>
<dbReference type="FunFam" id="3.40.50.880:FF:000023">
    <property type="entry name" value="Imidazole glycerol phosphate synthase subunit HisH"/>
    <property type="match status" value="1"/>
</dbReference>
<dbReference type="Gene3D" id="3.40.50.880">
    <property type="match status" value="1"/>
</dbReference>
<dbReference type="HAMAP" id="MF_00278">
    <property type="entry name" value="HisH"/>
    <property type="match status" value="1"/>
</dbReference>
<dbReference type="InterPro" id="IPR029062">
    <property type="entry name" value="Class_I_gatase-like"/>
</dbReference>
<dbReference type="InterPro" id="IPR017926">
    <property type="entry name" value="GATASE"/>
</dbReference>
<dbReference type="InterPro" id="IPR010139">
    <property type="entry name" value="Imidazole-glycPsynth_HisH"/>
</dbReference>
<dbReference type="NCBIfam" id="TIGR01855">
    <property type="entry name" value="IMP_synth_hisH"/>
    <property type="match status" value="1"/>
</dbReference>
<dbReference type="PANTHER" id="PTHR42701">
    <property type="entry name" value="IMIDAZOLE GLYCEROL PHOSPHATE SYNTHASE SUBUNIT HISH"/>
    <property type="match status" value="1"/>
</dbReference>
<dbReference type="PANTHER" id="PTHR42701:SF2">
    <property type="entry name" value="IMIDAZOLE GLYCEROL PHOSPHATE SYNTHASE SUBUNIT HISH 1"/>
    <property type="match status" value="1"/>
</dbReference>
<dbReference type="Pfam" id="PF00117">
    <property type="entry name" value="GATase"/>
    <property type="match status" value="1"/>
</dbReference>
<dbReference type="PIRSF" id="PIRSF000495">
    <property type="entry name" value="Amidotransf_hisH"/>
    <property type="match status" value="1"/>
</dbReference>
<dbReference type="SUPFAM" id="SSF52317">
    <property type="entry name" value="Class I glutamine amidotransferase-like"/>
    <property type="match status" value="1"/>
</dbReference>
<dbReference type="PROSITE" id="PS51273">
    <property type="entry name" value="GATASE_TYPE_1"/>
    <property type="match status" value="1"/>
</dbReference>
<protein>
    <recommendedName>
        <fullName>Imidazole glycerol phosphate synthase subunit HisH 1</fullName>
        <ecNumber>4.3.2.10</ecNumber>
    </recommendedName>
    <alternativeName>
        <fullName>IGP synthase glutaminase subunit 1</fullName>
        <ecNumber>3.5.1.2</ecNumber>
    </alternativeName>
    <alternativeName>
        <fullName>IGP synthase subunit HisH 1</fullName>
    </alternativeName>
    <alternativeName>
        <fullName>ImGP synthase subunit HisH 1</fullName>
        <shortName>IGPS subunit HisH 1</shortName>
    </alternativeName>
</protein>
<organism>
    <name type="scientific">Pseudomonas aeruginosa (strain ATCC 15692 / DSM 22644 / CIP 104116 / JCM 14847 / LMG 12228 / 1C / PRS 101 / PAO1)</name>
    <dbReference type="NCBI Taxonomy" id="208964"/>
    <lineage>
        <taxon>Bacteria</taxon>
        <taxon>Pseudomonadati</taxon>
        <taxon>Pseudomonadota</taxon>
        <taxon>Gammaproteobacteria</taxon>
        <taxon>Pseudomonadales</taxon>
        <taxon>Pseudomonadaceae</taxon>
        <taxon>Pseudomonas</taxon>
    </lineage>
</organism>
<reference key="1">
    <citation type="journal article" date="2000" name="Nature">
        <title>Complete genome sequence of Pseudomonas aeruginosa PAO1, an opportunistic pathogen.</title>
        <authorList>
            <person name="Stover C.K."/>
            <person name="Pham X.-Q.T."/>
            <person name="Erwin A.L."/>
            <person name="Mizoguchi S.D."/>
            <person name="Warrener P."/>
            <person name="Hickey M.J."/>
            <person name="Brinkman F.S.L."/>
            <person name="Hufnagle W.O."/>
            <person name="Kowalik D.J."/>
            <person name="Lagrou M."/>
            <person name="Garber R.L."/>
            <person name="Goltry L."/>
            <person name="Tolentino E."/>
            <person name="Westbrock-Wadman S."/>
            <person name="Yuan Y."/>
            <person name="Brody L.L."/>
            <person name="Coulter S.N."/>
            <person name="Folger K.R."/>
            <person name="Kas A."/>
            <person name="Larbig K."/>
            <person name="Lim R.M."/>
            <person name="Smith K.A."/>
            <person name="Spencer D.H."/>
            <person name="Wong G.K.-S."/>
            <person name="Wu Z."/>
            <person name="Paulsen I.T."/>
            <person name="Reizer J."/>
            <person name="Saier M.H. Jr."/>
            <person name="Hancock R.E.W."/>
            <person name="Lory S."/>
            <person name="Olson M.V."/>
        </authorList>
    </citation>
    <scope>NUCLEOTIDE SEQUENCE [LARGE SCALE GENOMIC DNA]</scope>
    <source>
        <strain>ATCC 15692 / DSM 22644 / CIP 104116 / JCM 14847 / LMG 12228 / 1C / PRS 101 / PAO1</strain>
    </source>
</reference>
<keyword id="KW-0028">Amino-acid biosynthesis</keyword>
<keyword id="KW-0963">Cytoplasm</keyword>
<keyword id="KW-0315">Glutamine amidotransferase</keyword>
<keyword id="KW-0368">Histidine biosynthesis</keyword>
<keyword id="KW-0378">Hydrolase</keyword>
<keyword id="KW-0456">Lyase</keyword>
<keyword id="KW-1185">Reference proteome</keyword>
<accession>Q9HU42</accession>
<sequence>MMQTVAVIDYGMGNLHSVAKALEHVGAGRVLVSSDAAVIREADRVVFPGVGAIRDCMAEIRRLGFDALVREVSQDRPFLGICVGMQALLERSEENDGVDCIGLFPGQVRFFGKDLHEAGEHLKVPHMGWNQVSQAVEHPLWHEIPDQARFYFVHSYYIEAGNPRQVVGHGHYGVDFAAALAEGSRFAVQFHPEKSHTHGLQLLQNFVAWDGRW</sequence>
<feature type="chain" id="PRO_0000152408" description="Imidazole glycerol phosphate synthase subunit HisH 1">
    <location>
        <begin position="1"/>
        <end position="213"/>
    </location>
</feature>
<feature type="domain" description="Glutamine amidotransferase type-1">
    <location>
        <begin position="4"/>
        <end position="213"/>
    </location>
</feature>
<feature type="active site" description="Nucleophile" evidence="1">
    <location>
        <position position="82"/>
    </location>
</feature>
<feature type="active site" evidence="1">
    <location>
        <position position="191"/>
    </location>
</feature>
<feature type="active site" evidence="1">
    <location>
        <position position="193"/>
    </location>
</feature>
<proteinExistence type="inferred from homology"/>
<name>HIS51_PSEAE</name>